<organism>
    <name type="scientific">Rhodospirillum centenum (strain ATCC 51521 / SW)</name>
    <dbReference type="NCBI Taxonomy" id="414684"/>
    <lineage>
        <taxon>Bacteria</taxon>
        <taxon>Pseudomonadati</taxon>
        <taxon>Pseudomonadota</taxon>
        <taxon>Alphaproteobacteria</taxon>
        <taxon>Rhodospirillales</taxon>
        <taxon>Rhodospirillaceae</taxon>
        <taxon>Rhodospirillum</taxon>
    </lineage>
</organism>
<reference key="1">
    <citation type="submission" date="2007-03" db="EMBL/GenBank/DDBJ databases">
        <title>Genome sequence of Rhodospirillum centenum.</title>
        <authorList>
            <person name="Touchman J.W."/>
            <person name="Bauer C."/>
            <person name="Blankenship R.E."/>
        </authorList>
    </citation>
    <scope>NUCLEOTIDE SEQUENCE [LARGE SCALE GENOMIC DNA]</scope>
    <source>
        <strain>ATCC 51521 / SW</strain>
    </source>
</reference>
<name>PYRG_RHOCS</name>
<feature type="chain" id="PRO_1000139546" description="CTP synthase">
    <location>
        <begin position="1"/>
        <end position="542"/>
    </location>
</feature>
<feature type="domain" description="Glutamine amidotransferase type-1" evidence="1">
    <location>
        <begin position="291"/>
        <end position="541"/>
    </location>
</feature>
<feature type="region of interest" description="Amidoligase domain" evidence="1">
    <location>
        <begin position="1"/>
        <end position="265"/>
    </location>
</feature>
<feature type="active site" description="Nucleophile; for glutamine hydrolysis" evidence="1">
    <location>
        <position position="380"/>
    </location>
</feature>
<feature type="active site" evidence="1">
    <location>
        <position position="514"/>
    </location>
</feature>
<feature type="active site" evidence="1">
    <location>
        <position position="516"/>
    </location>
</feature>
<feature type="binding site" evidence="1">
    <location>
        <position position="13"/>
    </location>
    <ligand>
        <name>CTP</name>
        <dbReference type="ChEBI" id="CHEBI:37563"/>
        <note>allosteric inhibitor</note>
    </ligand>
</feature>
<feature type="binding site" evidence="1">
    <location>
        <position position="13"/>
    </location>
    <ligand>
        <name>UTP</name>
        <dbReference type="ChEBI" id="CHEBI:46398"/>
    </ligand>
</feature>
<feature type="binding site" evidence="1">
    <location>
        <begin position="14"/>
        <end position="19"/>
    </location>
    <ligand>
        <name>ATP</name>
        <dbReference type="ChEBI" id="CHEBI:30616"/>
    </ligand>
</feature>
<feature type="binding site" evidence="1">
    <location>
        <position position="54"/>
    </location>
    <ligand>
        <name>L-glutamine</name>
        <dbReference type="ChEBI" id="CHEBI:58359"/>
    </ligand>
</feature>
<feature type="binding site" evidence="1">
    <location>
        <position position="71"/>
    </location>
    <ligand>
        <name>ATP</name>
        <dbReference type="ChEBI" id="CHEBI:30616"/>
    </ligand>
</feature>
<feature type="binding site" evidence="1">
    <location>
        <position position="71"/>
    </location>
    <ligand>
        <name>Mg(2+)</name>
        <dbReference type="ChEBI" id="CHEBI:18420"/>
    </ligand>
</feature>
<feature type="binding site" evidence="1">
    <location>
        <position position="139"/>
    </location>
    <ligand>
        <name>Mg(2+)</name>
        <dbReference type="ChEBI" id="CHEBI:18420"/>
    </ligand>
</feature>
<feature type="binding site" evidence="1">
    <location>
        <begin position="146"/>
        <end position="148"/>
    </location>
    <ligand>
        <name>CTP</name>
        <dbReference type="ChEBI" id="CHEBI:37563"/>
        <note>allosteric inhibitor</note>
    </ligand>
</feature>
<feature type="binding site" evidence="1">
    <location>
        <begin position="186"/>
        <end position="191"/>
    </location>
    <ligand>
        <name>CTP</name>
        <dbReference type="ChEBI" id="CHEBI:37563"/>
        <note>allosteric inhibitor</note>
    </ligand>
</feature>
<feature type="binding site" evidence="1">
    <location>
        <begin position="186"/>
        <end position="191"/>
    </location>
    <ligand>
        <name>UTP</name>
        <dbReference type="ChEBI" id="CHEBI:46398"/>
    </ligand>
</feature>
<feature type="binding site" evidence="1">
    <location>
        <position position="222"/>
    </location>
    <ligand>
        <name>CTP</name>
        <dbReference type="ChEBI" id="CHEBI:37563"/>
        <note>allosteric inhibitor</note>
    </ligand>
</feature>
<feature type="binding site" evidence="1">
    <location>
        <position position="222"/>
    </location>
    <ligand>
        <name>UTP</name>
        <dbReference type="ChEBI" id="CHEBI:46398"/>
    </ligand>
</feature>
<feature type="binding site" evidence="1">
    <location>
        <position position="353"/>
    </location>
    <ligand>
        <name>L-glutamine</name>
        <dbReference type="ChEBI" id="CHEBI:58359"/>
    </ligand>
</feature>
<feature type="binding site" evidence="1">
    <location>
        <begin position="381"/>
        <end position="384"/>
    </location>
    <ligand>
        <name>L-glutamine</name>
        <dbReference type="ChEBI" id="CHEBI:58359"/>
    </ligand>
</feature>
<feature type="binding site" evidence="1">
    <location>
        <position position="404"/>
    </location>
    <ligand>
        <name>L-glutamine</name>
        <dbReference type="ChEBI" id="CHEBI:58359"/>
    </ligand>
</feature>
<feature type="binding site" evidence="1">
    <location>
        <position position="469"/>
    </location>
    <ligand>
        <name>L-glutamine</name>
        <dbReference type="ChEBI" id="CHEBI:58359"/>
    </ligand>
</feature>
<protein>
    <recommendedName>
        <fullName evidence="1">CTP synthase</fullName>
        <ecNumber evidence="1">6.3.4.2</ecNumber>
    </recommendedName>
    <alternativeName>
        <fullName evidence="1">Cytidine 5'-triphosphate synthase</fullName>
    </alternativeName>
    <alternativeName>
        <fullName evidence="1">Cytidine triphosphate synthetase</fullName>
        <shortName evidence="1">CTP synthetase</shortName>
        <shortName evidence="1">CTPS</shortName>
    </alternativeName>
    <alternativeName>
        <fullName evidence="1">UTP--ammonia ligase</fullName>
    </alternativeName>
</protein>
<comment type="function">
    <text evidence="1">Catalyzes the ATP-dependent amination of UTP to CTP with either L-glutamine or ammonia as the source of nitrogen. Regulates intracellular CTP levels through interactions with the four ribonucleotide triphosphates.</text>
</comment>
<comment type="catalytic activity">
    <reaction evidence="1">
        <text>UTP + L-glutamine + ATP + H2O = CTP + L-glutamate + ADP + phosphate + 2 H(+)</text>
        <dbReference type="Rhea" id="RHEA:26426"/>
        <dbReference type="ChEBI" id="CHEBI:15377"/>
        <dbReference type="ChEBI" id="CHEBI:15378"/>
        <dbReference type="ChEBI" id="CHEBI:29985"/>
        <dbReference type="ChEBI" id="CHEBI:30616"/>
        <dbReference type="ChEBI" id="CHEBI:37563"/>
        <dbReference type="ChEBI" id="CHEBI:43474"/>
        <dbReference type="ChEBI" id="CHEBI:46398"/>
        <dbReference type="ChEBI" id="CHEBI:58359"/>
        <dbReference type="ChEBI" id="CHEBI:456216"/>
        <dbReference type="EC" id="6.3.4.2"/>
    </reaction>
</comment>
<comment type="catalytic activity">
    <reaction evidence="1">
        <text>L-glutamine + H2O = L-glutamate + NH4(+)</text>
        <dbReference type="Rhea" id="RHEA:15889"/>
        <dbReference type="ChEBI" id="CHEBI:15377"/>
        <dbReference type="ChEBI" id="CHEBI:28938"/>
        <dbReference type="ChEBI" id="CHEBI:29985"/>
        <dbReference type="ChEBI" id="CHEBI:58359"/>
    </reaction>
</comment>
<comment type="catalytic activity">
    <reaction evidence="1">
        <text>UTP + NH4(+) + ATP = CTP + ADP + phosphate + 2 H(+)</text>
        <dbReference type="Rhea" id="RHEA:16597"/>
        <dbReference type="ChEBI" id="CHEBI:15378"/>
        <dbReference type="ChEBI" id="CHEBI:28938"/>
        <dbReference type="ChEBI" id="CHEBI:30616"/>
        <dbReference type="ChEBI" id="CHEBI:37563"/>
        <dbReference type="ChEBI" id="CHEBI:43474"/>
        <dbReference type="ChEBI" id="CHEBI:46398"/>
        <dbReference type="ChEBI" id="CHEBI:456216"/>
    </reaction>
</comment>
<comment type="activity regulation">
    <text evidence="1">Allosterically activated by GTP, when glutamine is the substrate; GTP has no effect on the reaction when ammonia is the substrate. The allosteric effector GTP functions by stabilizing the protein conformation that binds the tetrahedral intermediate(s) formed during glutamine hydrolysis. Inhibited by the product CTP, via allosteric rather than competitive inhibition.</text>
</comment>
<comment type="pathway">
    <text evidence="1">Pyrimidine metabolism; CTP biosynthesis via de novo pathway; CTP from UDP: step 2/2.</text>
</comment>
<comment type="subunit">
    <text evidence="1">Homotetramer.</text>
</comment>
<comment type="miscellaneous">
    <text evidence="1">CTPSs have evolved a hybrid strategy for distinguishing between UTP and CTP. The overlapping regions of the product feedback inhibitory and substrate sites recognize a common feature in both compounds, the triphosphate moiety. To differentiate isosteric substrate and product pyrimidine rings, an additional pocket far from the expected kinase/ligase catalytic site, specifically recognizes the cytosine and ribose portions of the product inhibitor.</text>
</comment>
<comment type="similarity">
    <text evidence="1">Belongs to the CTP synthase family.</text>
</comment>
<proteinExistence type="inferred from homology"/>
<gene>
    <name evidence="1" type="primary">pyrG</name>
    <name type="ordered locus">RC1_0114</name>
</gene>
<dbReference type="EC" id="6.3.4.2" evidence="1"/>
<dbReference type="EMBL" id="CP000613">
    <property type="protein sequence ID" value="ACI97563.1"/>
    <property type="molecule type" value="Genomic_DNA"/>
</dbReference>
<dbReference type="RefSeq" id="WP_012565354.1">
    <property type="nucleotide sequence ID" value="NC_011420.2"/>
</dbReference>
<dbReference type="SMR" id="B6IQ27"/>
<dbReference type="STRING" id="414684.RC1_0114"/>
<dbReference type="MEROPS" id="C26.964"/>
<dbReference type="KEGG" id="rce:RC1_0114"/>
<dbReference type="eggNOG" id="COG0504">
    <property type="taxonomic scope" value="Bacteria"/>
</dbReference>
<dbReference type="HOGENOM" id="CLU_011675_5_0_5"/>
<dbReference type="OrthoDB" id="9801107at2"/>
<dbReference type="UniPathway" id="UPA00159">
    <property type="reaction ID" value="UER00277"/>
</dbReference>
<dbReference type="Proteomes" id="UP000001591">
    <property type="component" value="Chromosome"/>
</dbReference>
<dbReference type="GO" id="GO:0005829">
    <property type="term" value="C:cytosol"/>
    <property type="evidence" value="ECO:0007669"/>
    <property type="project" value="TreeGrafter"/>
</dbReference>
<dbReference type="GO" id="GO:0005524">
    <property type="term" value="F:ATP binding"/>
    <property type="evidence" value="ECO:0007669"/>
    <property type="project" value="UniProtKB-KW"/>
</dbReference>
<dbReference type="GO" id="GO:0003883">
    <property type="term" value="F:CTP synthase activity"/>
    <property type="evidence" value="ECO:0007669"/>
    <property type="project" value="UniProtKB-UniRule"/>
</dbReference>
<dbReference type="GO" id="GO:0004359">
    <property type="term" value="F:glutaminase activity"/>
    <property type="evidence" value="ECO:0007669"/>
    <property type="project" value="RHEA"/>
</dbReference>
<dbReference type="GO" id="GO:0042802">
    <property type="term" value="F:identical protein binding"/>
    <property type="evidence" value="ECO:0007669"/>
    <property type="project" value="TreeGrafter"/>
</dbReference>
<dbReference type="GO" id="GO:0046872">
    <property type="term" value="F:metal ion binding"/>
    <property type="evidence" value="ECO:0007669"/>
    <property type="project" value="UniProtKB-KW"/>
</dbReference>
<dbReference type="GO" id="GO:0044210">
    <property type="term" value="P:'de novo' CTP biosynthetic process"/>
    <property type="evidence" value="ECO:0007669"/>
    <property type="project" value="UniProtKB-UniRule"/>
</dbReference>
<dbReference type="GO" id="GO:0019856">
    <property type="term" value="P:pyrimidine nucleobase biosynthetic process"/>
    <property type="evidence" value="ECO:0007669"/>
    <property type="project" value="TreeGrafter"/>
</dbReference>
<dbReference type="CDD" id="cd03113">
    <property type="entry name" value="CTPS_N"/>
    <property type="match status" value="1"/>
</dbReference>
<dbReference type="CDD" id="cd01746">
    <property type="entry name" value="GATase1_CTP_Synthase"/>
    <property type="match status" value="1"/>
</dbReference>
<dbReference type="FunFam" id="3.40.50.300:FF:000009">
    <property type="entry name" value="CTP synthase"/>
    <property type="match status" value="1"/>
</dbReference>
<dbReference type="FunFam" id="3.40.50.880:FF:000002">
    <property type="entry name" value="CTP synthase"/>
    <property type="match status" value="1"/>
</dbReference>
<dbReference type="Gene3D" id="3.40.50.880">
    <property type="match status" value="1"/>
</dbReference>
<dbReference type="Gene3D" id="3.40.50.300">
    <property type="entry name" value="P-loop containing nucleotide triphosphate hydrolases"/>
    <property type="match status" value="1"/>
</dbReference>
<dbReference type="HAMAP" id="MF_01227">
    <property type="entry name" value="PyrG"/>
    <property type="match status" value="1"/>
</dbReference>
<dbReference type="InterPro" id="IPR029062">
    <property type="entry name" value="Class_I_gatase-like"/>
</dbReference>
<dbReference type="InterPro" id="IPR004468">
    <property type="entry name" value="CTP_synthase"/>
</dbReference>
<dbReference type="InterPro" id="IPR017456">
    <property type="entry name" value="CTP_synthase_N"/>
</dbReference>
<dbReference type="InterPro" id="IPR017926">
    <property type="entry name" value="GATASE"/>
</dbReference>
<dbReference type="InterPro" id="IPR033828">
    <property type="entry name" value="GATase1_CTP_Synthase"/>
</dbReference>
<dbReference type="InterPro" id="IPR027417">
    <property type="entry name" value="P-loop_NTPase"/>
</dbReference>
<dbReference type="NCBIfam" id="NF003792">
    <property type="entry name" value="PRK05380.1"/>
    <property type="match status" value="1"/>
</dbReference>
<dbReference type="NCBIfam" id="TIGR00337">
    <property type="entry name" value="PyrG"/>
    <property type="match status" value="1"/>
</dbReference>
<dbReference type="PANTHER" id="PTHR11550">
    <property type="entry name" value="CTP SYNTHASE"/>
    <property type="match status" value="1"/>
</dbReference>
<dbReference type="PANTHER" id="PTHR11550:SF0">
    <property type="entry name" value="CTP SYNTHASE-RELATED"/>
    <property type="match status" value="1"/>
</dbReference>
<dbReference type="Pfam" id="PF06418">
    <property type="entry name" value="CTP_synth_N"/>
    <property type="match status" value="1"/>
</dbReference>
<dbReference type="Pfam" id="PF00117">
    <property type="entry name" value="GATase"/>
    <property type="match status" value="1"/>
</dbReference>
<dbReference type="SUPFAM" id="SSF52317">
    <property type="entry name" value="Class I glutamine amidotransferase-like"/>
    <property type="match status" value="1"/>
</dbReference>
<dbReference type="SUPFAM" id="SSF52540">
    <property type="entry name" value="P-loop containing nucleoside triphosphate hydrolases"/>
    <property type="match status" value="1"/>
</dbReference>
<dbReference type="PROSITE" id="PS51273">
    <property type="entry name" value="GATASE_TYPE_1"/>
    <property type="match status" value="1"/>
</dbReference>
<sequence length="542" mass="59675">MTRFIFITGGVVSSLGKGLASAALGALLQARGFKVRLRKLDPYLNVDPGTMSPYQHGEVYVTDDGAETDLDLGHYERFTGVPTRQSDNITTGRIYSNVIAKERRGDYLGATVQVIPHITDAIKEFVQADLTDEDFCLVEVGGTVGDIESLPFLEAIRQLGNELGPDRALFTHVTLLPYIPAAGELKTKPTQHSVKELLSVGIQPQILLCRADRPIPDNERRKIALFCNIKQEAVIAALDVDTIYQVPISYHEQGFDTQVLKFFGMPVGGEPDLSRWQEIVSRVRHPEGEVTIAVVGKYTSLLDAYKSLGEALTHGGIANNVKVKLDWIDAEIFETDGAIHRLEGVHGILVPGGFGERGTEGKIKAAQFARERGIPYFGICFGMQMAVIEATRHLAGLENAGSSEFGHPDPAVVGLMTEWSRGNQLEKRAAGGDLGGTMRLGSYDCHLLPGTKVRDIYGADFIQERHRHRYEVNINFRDKLEAVGLTFSGLSPDGVLPEIVELPTHPWYIGVQFHPELKSKPFEPHPLFTSFIRAAIEQSRLV</sequence>
<keyword id="KW-0067">ATP-binding</keyword>
<keyword id="KW-0315">Glutamine amidotransferase</keyword>
<keyword id="KW-0436">Ligase</keyword>
<keyword id="KW-0460">Magnesium</keyword>
<keyword id="KW-0479">Metal-binding</keyword>
<keyword id="KW-0547">Nucleotide-binding</keyword>
<keyword id="KW-0665">Pyrimidine biosynthesis</keyword>
<keyword id="KW-1185">Reference proteome</keyword>
<evidence type="ECO:0000255" key="1">
    <source>
        <dbReference type="HAMAP-Rule" id="MF_01227"/>
    </source>
</evidence>
<accession>B6IQ27</accession>